<comment type="function">
    <text evidence="1">Cytoskeletal protein that is involved in cell-shape control through regulation of the length of the long axis.</text>
</comment>
<comment type="subcellular location">
    <subcellularLocation>
        <location evidence="1">Cell inner membrane</location>
        <topology evidence="1">Single-pass type II membrane protein</topology>
    </subcellularLocation>
    <text evidence="1">Forms helical filaments along the long axis of the cell.</text>
</comment>
<comment type="domain">
    <text evidence="1">The helix-turn-helix (HTH) motif in the cytoplasmic domain of the N-terminus is involved in the formation of spirals to maintain the rigid rod shape. As this protein is anchored in the cytoplasmic membrane, the HTH motif may contribute to protein-protein interactions to form the RodZ helix, which is localized beneath the cytoplasmic membrane. The C-terminal domain may be critical for determination of the rod shape by probably interacting with enzymes required for synthesis of the peptidoglycan layer, including PBPs in the periplasm.</text>
</comment>
<comment type="similarity">
    <text evidence="1">Belongs to the RodZ family.</text>
</comment>
<gene>
    <name evidence="1" type="primary">rodZ</name>
    <name type="ordered locus">ECH74115_3741</name>
</gene>
<organism>
    <name type="scientific">Escherichia coli O157:H7 (strain EC4115 / EHEC)</name>
    <dbReference type="NCBI Taxonomy" id="444450"/>
    <lineage>
        <taxon>Bacteria</taxon>
        <taxon>Pseudomonadati</taxon>
        <taxon>Pseudomonadota</taxon>
        <taxon>Gammaproteobacteria</taxon>
        <taxon>Enterobacterales</taxon>
        <taxon>Enterobacteriaceae</taxon>
        <taxon>Escherichia</taxon>
    </lineage>
</organism>
<name>RODZ_ECO5E</name>
<accession>B5Z0Y5</accession>
<reference key="1">
    <citation type="journal article" date="2011" name="Proc. Natl. Acad. Sci. U.S.A.">
        <title>Genomic anatomy of Escherichia coli O157:H7 outbreaks.</title>
        <authorList>
            <person name="Eppinger M."/>
            <person name="Mammel M.K."/>
            <person name="Leclerc J.E."/>
            <person name="Ravel J."/>
            <person name="Cebula T.A."/>
        </authorList>
    </citation>
    <scope>NUCLEOTIDE SEQUENCE [LARGE SCALE GENOMIC DNA]</scope>
    <source>
        <strain>EC4115 / EHEC</strain>
    </source>
</reference>
<evidence type="ECO:0000255" key="1">
    <source>
        <dbReference type="HAMAP-Rule" id="MF_02017"/>
    </source>
</evidence>
<evidence type="ECO:0000256" key="2">
    <source>
        <dbReference type="SAM" id="MobiDB-lite"/>
    </source>
</evidence>
<dbReference type="EMBL" id="CP001164">
    <property type="protein sequence ID" value="ACI35131.1"/>
    <property type="molecule type" value="Genomic_DNA"/>
</dbReference>
<dbReference type="RefSeq" id="WP_001090860.1">
    <property type="nucleotide sequence ID" value="NC_011353.1"/>
</dbReference>
<dbReference type="SMR" id="B5Z0Y5"/>
<dbReference type="KEGG" id="ecf:ECH74115_3741"/>
<dbReference type="HOGENOM" id="CLU_047530_3_1_6"/>
<dbReference type="GO" id="GO:0005886">
    <property type="term" value="C:plasma membrane"/>
    <property type="evidence" value="ECO:0007669"/>
    <property type="project" value="UniProtKB-SubCell"/>
</dbReference>
<dbReference type="GO" id="GO:0003677">
    <property type="term" value="F:DNA binding"/>
    <property type="evidence" value="ECO:0007669"/>
    <property type="project" value="UniProtKB-KW"/>
</dbReference>
<dbReference type="GO" id="GO:0008360">
    <property type="term" value="P:regulation of cell shape"/>
    <property type="evidence" value="ECO:0007669"/>
    <property type="project" value="UniProtKB-UniRule"/>
</dbReference>
<dbReference type="CDD" id="cd00093">
    <property type="entry name" value="HTH_XRE"/>
    <property type="match status" value="1"/>
</dbReference>
<dbReference type="FunFam" id="1.10.260.40:FF:000014">
    <property type="entry name" value="Cytoskeleton protein RodZ"/>
    <property type="match status" value="1"/>
</dbReference>
<dbReference type="Gene3D" id="1.10.260.40">
    <property type="entry name" value="lambda repressor-like DNA-binding domains"/>
    <property type="match status" value="1"/>
</dbReference>
<dbReference type="HAMAP" id="MF_02017">
    <property type="entry name" value="RodZ"/>
    <property type="match status" value="1"/>
</dbReference>
<dbReference type="InterPro" id="IPR050400">
    <property type="entry name" value="Bact_Cytoskel_RodZ"/>
</dbReference>
<dbReference type="InterPro" id="IPR001387">
    <property type="entry name" value="Cro/C1-type_HTH"/>
</dbReference>
<dbReference type="InterPro" id="IPR010982">
    <property type="entry name" value="Lambda_DNA-bd_dom_sf"/>
</dbReference>
<dbReference type="InterPro" id="IPR023690">
    <property type="entry name" value="RodZ"/>
</dbReference>
<dbReference type="InterPro" id="IPR025194">
    <property type="entry name" value="RodZ-like_C"/>
</dbReference>
<dbReference type="NCBIfam" id="NF008109">
    <property type="entry name" value="PRK10856.1"/>
    <property type="match status" value="1"/>
</dbReference>
<dbReference type="PANTHER" id="PTHR34475">
    <property type="match status" value="1"/>
</dbReference>
<dbReference type="PANTHER" id="PTHR34475:SF1">
    <property type="entry name" value="CYTOSKELETON PROTEIN RODZ"/>
    <property type="match status" value="1"/>
</dbReference>
<dbReference type="Pfam" id="PF13413">
    <property type="entry name" value="HTH_25"/>
    <property type="match status" value="1"/>
</dbReference>
<dbReference type="Pfam" id="PF13464">
    <property type="entry name" value="RodZ_C"/>
    <property type="match status" value="1"/>
</dbReference>
<dbReference type="SMART" id="SM00530">
    <property type="entry name" value="HTH_XRE"/>
    <property type="match status" value="1"/>
</dbReference>
<dbReference type="SUPFAM" id="SSF47413">
    <property type="entry name" value="lambda repressor-like DNA-binding domains"/>
    <property type="match status" value="1"/>
</dbReference>
<dbReference type="PROSITE" id="PS50943">
    <property type="entry name" value="HTH_CROC1"/>
    <property type="match status" value="1"/>
</dbReference>
<proteinExistence type="inferred from homology"/>
<protein>
    <recommendedName>
        <fullName evidence="1">Cytoskeleton protein RodZ</fullName>
    </recommendedName>
</protein>
<feature type="chain" id="PRO_0000361840" description="Cytoskeleton protein RodZ">
    <location>
        <begin position="1"/>
        <end position="337"/>
    </location>
</feature>
<feature type="topological domain" description="Cytoplasmic" evidence="1">
    <location>
        <begin position="1"/>
        <end position="111"/>
    </location>
</feature>
<feature type="transmembrane region" description="Helical; Signal-anchor for type II membrane protein" evidence="1">
    <location>
        <begin position="112"/>
        <end position="132"/>
    </location>
</feature>
<feature type="topological domain" description="Periplasmic" evidence="1">
    <location>
        <begin position="133"/>
        <end position="337"/>
    </location>
</feature>
<feature type="domain" description="HTH cro/C1-type" evidence="1">
    <location>
        <begin position="19"/>
        <end position="71"/>
    </location>
</feature>
<feature type="DNA-binding region" description="H-T-H motif" evidence="1">
    <location>
        <begin position="30"/>
        <end position="49"/>
    </location>
</feature>
<feature type="region of interest" description="Disordered" evidence="2">
    <location>
        <begin position="145"/>
        <end position="236"/>
    </location>
</feature>
<feature type="compositionally biased region" description="Polar residues" evidence="2">
    <location>
        <begin position="145"/>
        <end position="167"/>
    </location>
</feature>
<feature type="compositionally biased region" description="Low complexity" evidence="2">
    <location>
        <begin position="168"/>
        <end position="207"/>
    </location>
</feature>
<feature type="compositionally biased region" description="Polar residues" evidence="2">
    <location>
        <begin position="208"/>
        <end position="218"/>
    </location>
</feature>
<feature type="compositionally biased region" description="Low complexity" evidence="2">
    <location>
        <begin position="219"/>
        <end position="236"/>
    </location>
</feature>
<sequence>MNTEATHDQNEALTTGARLRNAREQLGLSQQAVAERLCLKVSTVRDIEEDKAPADLASTFLRGYIRSYARLVHIPEEELLPGLEKQAPLRAAKVAPMQSFSLGKRRKKRDGWLMTFTWLVLFVVIGLSGAWWWQDHKAQQEEITTMADQSSAELSSNSEQGQSVPLNTSTTTDPATTSTPPASVDTTATNTQTPVVTAPAPAVDPQQNAVVSPSQANVDTAATPAPTAATTPDGAAPLPTDQAGVTTPVADPNALVMNFTADCWLEVTDATGKKLFSGMQRKDGNLNLTGQAPYKLKIGAPAAVQIQYQGKPVDLSRFIRTNQVARLTLNAEQSPAQ</sequence>
<keyword id="KW-0997">Cell inner membrane</keyword>
<keyword id="KW-1003">Cell membrane</keyword>
<keyword id="KW-0133">Cell shape</keyword>
<keyword id="KW-0238">DNA-binding</keyword>
<keyword id="KW-0472">Membrane</keyword>
<keyword id="KW-0735">Signal-anchor</keyword>
<keyword id="KW-0812">Transmembrane</keyword>
<keyword id="KW-1133">Transmembrane helix</keyword>